<organism>
    <name type="scientific">Bacillus thuringiensis (strain Al Hakam)</name>
    <dbReference type="NCBI Taxonomy" id="412694"/>
    <lineage>
        <taxon>Bacteria</taxon>
        <taxon>Bacillati</taxon>
        <taxon>Bacillota</taxon>
        <taxon>Bacilli</taxon>
        <taxon>Bacillales</taxon>
        <taxon>Bacillaceae</taxon>
        <taxon>Bacillus</taxon>
        <taxon>Bacillus cereus group</taxon>
    </lineage>
</organism>
<keyword id="KW-0963">Cytoplasm</keyword>
<keyword id="KW-0369">Histidine metabolism</keyword>
<keyword id="KW-0456">Lyase</keyword>
<keyword id="KW-0520">NAD</keyword>
<reference key="1">
    <citation type="journal article" date="2007" name="J. Bacteriol.">
        <title>The complete genome sequence of Bacillus thuringiensis Al Hakam.</title>
        <authorList>
            <person name="Challacombe J.F."/>
            <person name="Altherr M.R."/>
            <person name="Xie G."/>
            <person name="Bhotika S.S."/>
            <person name="Brown N."/>
            <person name="Bruce D."/>
            <person name="Campbell C.S."/>
            <person name="Campbell M.L."/>
            <person name="Chen J."/>
            <person name="Chertkov O."/>
            <person name="Cleland C."/>
            <person name="Dimitrijevic M."/>
            <person name="Doggett N.A."/>
            <person name="Fawcett J.J."/>
            <person name="Glavina T."/>
            <person name="Goodwin L.A."/>
            <person name="Green L.D."/>
            <person name="Han C.S."/>
            <person name="Hill K.K."/>
            <person name="Hitchcock P."/>
            <person name="Jackson P.J."/>
            <person name="Keim P."/>
            <person name="Kewalramani A.R."/>
            <person name="Longmire J."/>
            <person name="Lucas S."/>
            <person name="Malfatti S."/>
            <person name="Martinez D."/>
            <person name="McMurry K."/>
            <person name="Meincke L.J."/>
            <person name="Misra M."/>
            <person name="Moseman B.L."/>
            <person name="Mundt M."/>
            <person name="Munk A.C."/>
            <person name="Okinaka R.T."/>
            <person name="Parson-Quintana B."/>
            <person name="Reilly L.P."/>
            <person name="Richardson P."/>
            <person name="Robinson D.L."/>
            <person name="Saunders E."/>
            <person name="Tapia R."/>
            <person name="Tesmer J.G."/>
            <person name="Thayer N."/>
            <person name="Thompson L.S."/>
            <person name="Tice H."/>
            <person name="Ticknor L.O."/>
            <person name="Wills P.L."/>
            <person name="Gilna P."/>
            <person name="Brettin T.S."/>
        </authorList>
    </citation>
    <scope>NUCLEOTIDE SEQUENCE [LARGE SCALE GENOMIC DNA]</scope>
    <source>
        <strain>Al Hakam</strain>
    </source>
</reference>
<feature type="chain" id="PRO_1000025116" description="Urocanate hydratase">
    <location>
        <begin position="1"/>
        <end position="552"/>
    </location>
</feature>
<feature type="active site" evidence="1">
    <location>
        <position position="407"/>
    </location>
</feature>
<feature type="binding site" evidence="1">
    <location>
        <begin position="49"/>
        <end position="50"/>
    </location>
    <ligand>
        <name>NAD(+)</name>
        <dbReference type="ChEBI" id="CHEBI:57540"/>
    </ligand>
</feature>
<feature type="binding site" evidence="1">
    <location>
        <position position="127"/>
    </location>
    <ligand>
        <name>NAD(+)</name>
        <dbReference type="ChEBI" id="CHEBI:57540"/>
    </ligand>
</feature>
<feature type="binding site" evidence="1">
    <location>
        <begin position="173"/>
        <end position="175"/>
    </location>
    <ligand>
        <name>NAD(+)</name>
        <dbReference type="ChEBI" id="CHEBI:57540"/>
    </ligand>
</feature>
<feature type="binding site" evidence="1">
    <location>
        <position position="193"/>
    </location>
    <ligand>
        <name>NAD(+)</name>
        <dbReference type="ChEBI" id="CHEBI:57540"/>
    </ligand>
</feature>
<feature type="binding site" evidence="1">
    <location>
        <begin position="239"/>
        <end position="240"/>
    </location>
    <ligand>
        <name>NAD(+)</name>
        <dbReference type="ChEBI" id="CHEBI:57540"/>
    </ligand>
</feature>
<feature type="binding site" evidence="1">
    <location>
        <begin position="260"/>
        <end position="264"/>
    </location>
    <ligand>
        <name>NAD(+)</name>
        <dbReference type="ChEBI" id="CHEBI:57540"/>
    </ligand>
</feature>
<feature type="binding site" evidence="1">
    <location>
        <begin position="270"/>
        <end position="271"/>
    </location>
    <ligand>
        <name>NAD(+)</name>
        <dbReference type="ChEBI" id="CHEBI:57540"/>
    </ligand>
</feature>
<feature type="binding site" evidence="1">
    <location>
        <position position="319"/>
    </location>
    <ligand>
        <name>NAD(+)</name>
        <dbReference type="ChEBI" id="CHEBI:57540"/>
    </ligand>
</feature>
<feature type="binding site" evidence="1">
    <location>
        <position position="489"/>
    </location>
    <ligand>
        <name>NAD(+)</name>
        <dbReference type="ChEBI" id="CHEBI:57540"/>
    </ligand>
</feature>
<protein>
    <recommendedName>
        <fullName evidence="1">Urocanate hydratase</fullName>
        <shortName evidence="1">Urocanase</shortName>
        <ecNumber evidence="1">4.2.1.49</ecNumber>
    </recommendedName>
    <alternativeName>
        <fullName evidence="1">Imidazolonepropionate hydrolase</fullName>
    </alternativeName>
</protein>
<comment type="function">
    <text evidence="1">Catalyzes the conversion of urocanate to 4-imidazolone-5-propionate.</text>
</comment>
<comment type="catalytic activity">
    <reaction evidence="1">
        <text>4-imidazolone-5-propanoate = trans-urocanate + H2O</text>
        <dbReference type="Rhea" id="RHEA:13101"/>
        <dbReference type="ChEBI" id="CHEBI:15377"/>
        <dbReference type="ChEBI" id="CHEBI:17771"/>
        <dbReference type="ChEBI" id="CHEBI:77893"/>
        <dbReference type="EC" id="4.2.1.49"/>
    </reaction>
</comment>
<comment type="cofactor">
    <cofactor evidence="1">
        <name>NAD(+)</name>
        <dbReference type="ChEBI" id="CHEBI:57540"/>
    </cofactor>
    <text evidence="1">Binds 1 NAD(+) per subunit.</text>
</comment>
<comment type="pathway">
    <text evidence="1">Amino-acid degradation; L-histidine degradation into L-glutamate; N-formimidoyl-L-glutamate from L-histidine: step 2/3.</text>
</comment>
<comment type="subcellular location">
    <subcellularLocation>
        <location evidence="1">Cytoplasm</location>
    </subcellularLocation>
</comment>
<comment type="similarity">
    <text evidence="1">Belongs to the urocanase family.</text>
</comment>
<evidence type="ECO:0000255" key="1">
    <source>
        <dbReference type="HAMAP-Rule" id="MF_00577"/>
    </source>
</evidence>
<dbReference type="EC" id="4.2.1.49" evidence="1"/>
<dbReference type="EMBL" id="CP000485">
    <property type="protein sequence ID" value="ABK86531.1"/>
    <property type="molecule type" value="Genomic_DNA"/>
</dbReference>
<dbReference type="RefSeq" id="WP_000416949.1">
    <property type="nucleotide sequence ID" value="NC_008600.1"/>
</dbReference>
<dbReference type="SMR" id="A0RH38"/>
<dbReference type="KEGG" id="btl:BALH_3286"/>
<dbReference type="HOGENOM" id="CLU_018868_0_1_9"/>
<dbReference type="UniPathway" id="UPA00379">
    <property type="reaction ID" value="UER00550"/>
</dbReference>
<dbReference type="GO" id="GO:0005737">
    <property type="term" value="C:cytoplasm"/>
    <property type="evidence" value="ECO:0007669"/>
    <property type="project" value="UniProtKB-SubCell"/>
</dbReference>
<dbReference type="GO" id="GO:0016153">
    <property type="term" value="F:urocanate hydratase activity"/>
    <property type="evidence" value="ECO:0007669"/>
    <property type="project" value="UniProtKB-UniRule"/>
</dbReference>
<dbReference type="GO" id="GO:0019556">
    <property type="term" value="P:L-histidine catabolic process to glutamate and formamide"/>
    <property type="evidence" value="ECO:0007669"/>
    <property type="project" value="UniProtKB-UniPathway"/>
</dbReference>
<dbReference type="GO" id="GO:0019557">
    <property type="term" value="P:L-histidine catabolic process to glutamate and formate"/>
    <property type="evidence" value="ECO:0007669"/>
    <property type="project" value="UniProtKB-UniPathway"/>
</dbReference>
<dbReference type="FunFam" id="3.40.50.10730:FF:000001">
    <property type="entry name" value="Urocanate hydratase"/>
    <property type="match status" value="1"/>
</dbReference>
<dbReference type="Gene3D" id="3.40.50.10730">
    <property type="entry name" value="Urocanase like domains"/>
    <property type="match status" value="1"/>
</dbReference>
<dbReference type="Gene3D" id="3.40.1770.10">
    <property type="entry name" value="Urocanase superfamily"/>
    <property type="match status" value="1"/>
</dbReference>
<dbReference type="HAMAP" id="MF_00577">
    <property type="entry name" value="HutU"/>
    <property type="match status" value="1"/>
</dbReference>
<dbReference type="InterPro" id="IPR055351">
    <property type="entry name" value="Urocanase"/>
</dbReference>
<dbReference type="InterPro" id="IPR023637">
    <property type="entry name" value="Urocanase-like"/>
</dbReference>
<dbReference type="InterPro" id="IPR035401">
    <property type="entry name" value="Urocanase_C"/>
</dbReference>
<dbReference type="InterPro" id="IPR038364">
    <property type="entry name" value="Urocanase_central_sf"/>
</dbReference>
<dbReference type="InterPro" id="IPR023636">
    <property type="entry name" value="Urocanase_CS"/>
</dbReference>
<dbReference type="InterPro" id="IPR035400">
    <property type="entry name" value="Urocanase_N"/>
</dbReference>
<dbReference type="InterPro" id="IPR035085">
    <property type="entry name" value="Urocanase_Rossmann-like"/>
</dbReference>
<dbReference type="InterPro" id="IPR036190">
    <property type="entry name" value="Urocanase_sf"/>
</dbReference>
<dbReference type="NCBIfam" id="TIGR01228">
    <property type="entry name" value="hutU"/>
    <property type="match status" value="1"/>
</dbReference>
<dbReference type="NCBIfam" id="NF003820">
    <property type="entry name" value="PRK05414.1"/>
    <property type="match status" value="1"/>
</dbReference>
<dbReference type="PANTHER" id="PTHR12216">
    <property type="entry name" value="UROCANATE HYDRATASE"/>
    <property type="match status" value="1"/>
</dbReference>
<dbReference type="PANTHER" id="PTHR12216:SF4">
    <property type="entry name" value="UROCANATE HYDRATASE"/>
    <property type="match status" value="1"/>
</dbReference>
<dbReference type="Pfam" id="PF01175">
    <property type="entry name" value="Urocanase"/>
    <property type="match status" value="1"/>
</dbReference>
<dbReference type="Pfam" id="PF17392">
    <property type="entry name" value="Urocanase_C"/>
    <property type="match status" value="1"/>
</dbReference>
<dbReference type="Pfam" id="PF17391">
    <property type="entry name" value="Urocanase_N"/>
    <property type="match status" value="1"/>
</dbReference>
<dbReference type="PIRSF" id="PIRSF001423">
    <property type="entry name" value="Urocanate_hydrat"/>
    <property type="match status" value="1"/>
</dbReference>
<dbReference type="SUPFAM" id="SSF111326">
    <property type="entry name" value="Urocanase"/>
    <property type="match status" value="1"/>
</dbReference>
<dbReference type="PROSITE" id="PS01233">
    <property type="entry name" value="UROCANASE"/>
    <property type="match status" value="1"/>
</dbReference>
<sequence length="552" mass="60762">MEKVQQTIRAPRGTELQTKGWVQEAALRMLMNNLDPEVAEKPEELVVYGGIGRAARNWESYQAIVDSLKTLESDETLLVQSGKPVAIFKSHEDAPRVLLANSNLVPKWANWDHFRELEKKGLMMYGQMTAGSWIYIGTQGILQGTYETFGEAARQHFGGSLKGTLTLTAGLGGMGGAQPLAVTMNGGVVIAIDVDKRSIDRRIEKRYCDMYTESLEEALAVANEYKEKKEPISIGLLGNAAEILPELVKRNITPDLVTDQTSAHDPLNGYIPVGYTLEEAAKLREEDPERYVQLSKESMTKHVEAMLAMQEKGAITFDYGNNIRQVAFDEGLKNAFDFPGFVPAFIRPLFCEGKGPFRWVALSGDPEDIYKTDEVILREFADNEHLCNWIRMARQQVEFQGLPSRICWLGYGERAKFGRIINEMVANGELSAPIVIGRDHLDCGSVASPNRETEAMKDGSDAVADWPILNALINSVNGASWVSVHHGGGVGMGYSLHAGMVIVADGTEAAAKRIERVLTSDPGMGVVRHVDAGYDLAVETAKEKGVNIPMMK</sequence>
<gene>
    <name evidence="1" type="primary">hutU</name>
    <name type="ordered locus">BALH_3286</name>
</gene>
<name>HUTU_BACAH</name>
<proteinExistence type="inferred from homology"/>
<accession>A0RH38</accession>